<reference key="1">
    <citation type="journal article" date="2007" name="Plant Cell">
        <title>Dothideomycete-plant interactions illuminated by genome sequencing and EST analysis of the wheat pathogen Stagonospora nodorum.</title>
        <authorList>
            <person name="Hane J.K."/>
            <person name="Lowe R.G.T."/>
            <person name="Solomon P.S."/>
            <person name="Tan K.-C."/>
            <person name="Schoch C.L."/>
            <person name="Spatafora J.W."/>
            <person name="Crous P.W."/>
            <person name="Kodira C.D."/>
            <person name="Birren B.W."/>
            <person name="Galagan J.E."/>
            <person name="Torriani S.F.F."/>
            <person name="McDonald B.A."/>
            <person name="Oliver R.P."/>
        </authorList>
    </citation>
    <scope>NUCLEOTIDE SEQUENCE [LARGE SCALE GENOMIC DNA]</scope>
    <source>
        <strain>SN15 / ATCC MYA-4574 / FGSC 10173</strain>
    </source>
</reference>
<protein>
    <recommendedName>
        <fullName evidence="1">Molybdopterin synthase catalytic subunit</fullName>
        <ecNumber evidence="1">2.8.1.12</ecNumber>
    </recommendedName>
    <alternativeName>
        <fullName evidence="1">Common component for nitrate reductase and xanthine dehydrogenase protein H</fullName>
    </alternativeName>
    <alternativeName>
        <fullName evidence="1">Molybdenum cofactor synthesis protein 2 large subunit</fullName>
    </alternativeName>
    <alternativeName>
        <fullName evidence="1">Molybdenum cofactor synthesis protein 2B</fullName>
        <shortName evidence="1">MOCS2B</shortName>
    </alternativeName>
</protein>
<evidence type="ECO:0000255" key="1">
    <source>
        <dbReference type="HAMAP-Rule" id="MF_03052"/>
    </source>
</evidence>
<evidence type="ECO:0000256" key="2">
    <source>
        <dbReference type="SAM" id="MobiDB-lite"/>
    </source>
</evidence>
<dbReference type="EC" id="2.8.1.12" evidence="1"/>
<dbReference type="EMBL" id="CH445325">
    <property type="protein sequence ID" value="EAT91696.2"/>
    <property type="molecule type" value="Genomic_DNA"/>
</dbReference>
<dbReference type="RefSeq" id="XP_001790894.1">
    <property type="nucleotide sequence ID" value="XM_001790842.1"/>
</dbReference>
<dbReference type="SMR" id="Q0V713"/>
<dbReference type="STRING" id="321614.Q0V713"/>
<dbReference type="EnsemblFungi" id="SNOT_00201">
    <property type="protein sequence ID" value="SNOT_00201"/>
    <property type="gene ID" value="SNOG_00201"/>
</dbReference>
<dbReference type="GeneID" id="5968456"/>
<dbReference type="KEGG" id="pno:SNOG_00201"/>
<dbReference type="VEuPathDB" id="FungiDB:JI435_002010"/>
<dbReference type="eggNOG" id="KOG3307">
    <property type="taxonomic scope" value="Eukaryota"/>
</dbReference>
<dbReference type="HOGENOM" id="CLU_089568_3_1_1"/>
<dbReference type="InParanoid" id="Q0V713"/>
<dbReference type="UniPathway" id="UPA00344"/>
<dbReference type="Proteomes" id="UP000001055">
    <property type="component" value="Unassembled WGS sequence"/>
</dbReference>
<dbReference type="GO" id="GO:0005829">
    <property type="term" value="C:cytosol"/>
    <property type="evidence" value="ECO:0000318"/>
    <property type="project" value="GO_Central"/>
</dbReference>
<dbReference type="GO" id="GO:1990140">
    <property type="term" value="C:molybdopterin synthase complex"/>
    <property type="evidence" value="ECO:0000250"/>
    <property type="project" value="UniProtKB"/>
</dbReference>
<dbReference type="GO" id="GO:0030366">
    <property type="term" value="F:molybdopterin synthase activity"/>
    <property type="evidence" value="ECO:0007669"/>
    <property type="project" value="UniProtKB-UniRule"/>
</dbReference>
<dbReference type="GO" id="GO:0006777">
    <property type="term" value="P:Mo-molybdopterin cofactor biosynthetic process"/>
    <property type="evidence" value="ECO:0000250"/>
    <property type="project" value="UniProtKB"/>
</dbReference>
<dbReference type="CDD" id="cd00756">
    <property type="entry name" value="MoaE"/>
    <property type="match status" value="1"/>
</dbReference>
<dbReference type="FunFam" id="3.90.1170.40:FF:000003">
    <property type="entry name" value="Molybdopterin converting factor subunit 2"/>
    <property type="match status" value="1"/>
</dbReference>
<dbReference type="Gene3D" id="3.90.1170.40">
    <property type="entry name" value="Molybdopterin biosynthesis MoaE subunit"/>
    <property type="match status" value="1"/>
</dbReference>
<dbReference type="HAMAP" id="MF_03052">
    <property type="entry name" value="MOC2B"/>
    <property type="match status" value="1"/>
</dbReference>
<dbReference type="InterPro" id="IPR036563">
    <property type="entry name" value="MoaE_sf"/>
</dbReference>
<dbReference type="InterPro" id="IPR028888">
    <property type="entry name" value="MOCS2B_euk"/>
</dbReference>
<dbReference type="InterPro" id="IPR003448">
    <property type="entry name" value="Mopterin_biosynth_MoaE"/>
</dbReference>
<dbReference type="PANTHER" id="PTHR23404">
    <property type="entry name" value="MOLYBDOPTERIN SYNTHASE RELATED"/>
    <property type="match status" value="1"/>
</dbReference>
<dbReference type="Pfam" id="PF02391">
    <property type="entry name" value="MoaE"/>
    <property type="match status" value="1"/>
</dbReference>
<dbReference type="SUPFAM" id="SSF54690">
    <property type="entry name" value="Molybdopterin synthase subunit MoaE"/>
    <property type="match status" value="1"/>
</dbReference>
<keyword id="KW-0963">Cytoplasm</keyword>
<keyword id="KW-0501">Molybdenum cofactor biosynthesis</keyword>
<keyword id="KW-0808">Transferase</keyword>
<accession>Q0V713</accession>
<gene>
    <name evidence="1" type="primary">cnxH</name>
    <name type="ORF">SNOG_00201</name>
</gene>
<feature type="chain" id="PRO_0000369359" description="Molybdopterin synthase catalytic subunit">
    <location>
        <begin position="1"/>
        <end position="188"/>
    </location>
</feature>
<feature type="region of interest" description="Disordered" evidence="2">
    <location>
        <begin position="1"/>
        <end position="21"/>
    </location>
</feature>
<feature type="compositionally biased region" description="Polar residues" evidence="2">
    <location>
        <begin position="1"/>
        <end position="10"/>
    </location>
</feature>
<feature type="binding site" evidence="1">
    <location>
        <begin position="123"/>
        <end position="124"/>
    </location>
    <ligand>
        <name>substrate</name>
    </ligand>
</feature>
<feature type="binding site" evidence="1">
    <location>
        <position position="139"/>
    </location>
    <ligand>
        <name>substrate</name>
    </ligand>
</feature>
<feature type="binding site" evidence="1">
    <location>
        <begin position="146"/>
        <end position="148"/>
    </location>
    <ligand>
        <name>substrate</name>
    </ligand>
</feature>
<name>MOC2B_PHANO</name>
<proteinExistence type="inferred from homology"/>
<comment type="function">
    <text evidence="1">Catalytic subunit of the molybdopterin synthase complex, a complex that catalyzes the conversion of precursor Z into molybdopterin. Acts by mediating the incorporation of 2 sulfur atoms from thiocarboxylated MOCS2A into precursor Z to generate a dithiolene group.</text>
</comment>
<comment type="catalytic activity">
    <reaction evidence="1">
        <text>2 [molybdopterin-synthase sulfur-carrier protein]-C-terminal-Gly-aminoethanethioate + cyclic pyranopterin phosphate + H2O = molybdopterin + 2 [molybdopterin-synthase sulfur-carrier protein]-C-terminal Gly-Gly + 2 H(+)</text>
        <dbReference type="Rhea" id="RHEA:26333"/>
        <dbReference type="Rhea" id="RHEA-COMP:12202"/>
        <dbReference type="Rhea" id="RHEA-COMP:19907"/>
        <dbReference type="ChEBI" id="CHEBI:15377"/>
        <dbReference type="ChEBI" id="CHEBI:15378"/>
        <dbReference type="ChEBI" id="CHEBI:58698"/>
        <dbReference type="ChEBI" id="CHEBI:59648"/>
        <dbReference type="ChEBI" id="CHEBI:90778"/>
        <dbReference type="ChEBI" id="CHEBI:232372"/>
        <dbReference type="EC" id="2.8.1.12"/>
    </reaction>
</comment>
<comment type="pathway">
    <text evidence="1">Cofactor biosynthesis; molybdopterin biosynthesis.</text>
</comment>
<comment type="subunit">
    <text evidence="1">Heterotetramer; composed of 2 small (MOCS2A) and 2 large (MOCS2B) subunits.</text>
</comment>
<comment type="subcellular location">
    <subcellularLocation>
        <location evidence="1">Cytoplasm</location>
    </subcellularLocation>
</comment>
<comment type="similarity">
    <text evidence="1">Belongs to the MoaE family. MOCS2B subfamily.</text>
</comment>
<sequence>MSTSETSSYTPDIPSEPVTKTTDTIHIELTPNDLDSLAATRFVRSPSAGATVLFIGTTRDSFNDKAVSSLSYTSYAPLAISTLYKIASNILTKHACTKIAIIHKLGECPIGEESIVIAVSAPHRKAAWLAGEEALEETKDKAEIWKLERFEGGEGVWRANRDGKVGERVDGGIAGLLGRIEVFADTNV</sequence>
<organism>
    <name type="scientific">Phaeosphaeria nodorum (strain SN15 / ATCC MYA-4574 / FGSC 10173)</name>
    <name type="common">Glume blotch fungus</name>
    <name type="synonym">Parastagonospora nodorum</name>
    <dbReference type="NCBI Taxonomy" id="321614"/>
    <lineage>
        <taxon>Eukaryota</taxon>
        <taxon>Fungi</taxon>
        <taxon>Dikarya</taxon>
        <taxon>Ascomycota</taxon>
        <taxon>Pezizomycotina</taxon>
        <taxon>Dothideomycetes</taxon>
        <taxon>Pleosporomycetidae</taxon>
        <taxon>Pleosporales</taxon>
        <taxon>Pleosporineae</taxon>
        <taxon>Phaeosphaeriaceae</taxon>
        <taxon>Parastagonospora</taxon>
    </lineage>
</organism>